<accession>Q5ZYP7</accession>
<feature type="chain" id="PRO_0000124280" description="Small ribosomal subunit protein uS7">
    <location>
        <begin position="1"/>
        <end position="175"/>
    </location>
</feature>
<protein>
    <recommendedName>
        <fullName evidence="1">Small ribosomal subunit protein uS7</fullName>
    </recommendedName>
    <alternativeName>
        <fullName evidence="2">30S ribosomal protein S7</fullName>
    </alternativeName>
</protein>
<gene>
    <name evidence="1" type="primary">rpsG</name>
    <name type="ordered locus">lpg0325</name>
</gene>
<organism>
    <name type="scientific">Legionella pneumophila subsp. pneumophila (strain Philadelphia 1 / ATCC 33152 / DSM 7513)</name>
    <dbReference type="NCBI Taxonomy" id="272624"/>
    <lineage>
        <taxon>Bacteria</taxon>
        <taxon>Pseudomonadati</taxon>
        <taxon>Pseudomonadota</taxon>
        <taxon>Gammaproteobacteria</taxon>
        <taxon>Legionellales</taxon>
        <taxon>Legionellaceae</taxon>
        <taxon>Legionella</taxon>
    </lineage>
</organism>
<evidence type="ECO:0000255" key="1">
    <source>
        <dbReference type="HAMAP-Rule" id="MF_00480"/>
    </source>
</evidence>
<evidence type="ECO:0000305" key="2"/>
<proteinExistence type="inferred from homology"/>
<dbReference type="EMBL" id="AE017354">
    <property type="protein sequence ID" value="AAU26422.1"/>
    <property type="molecule type" value="Genomic_DNA"/>
</dbReference>
<dbReference type="RefSeq" id="WP_010946075.1">
    <property type="nucleotide sequence ID" value="NC_002942.5"/>
</dbReference>
<dbReference type="RefSeq" id="YP_094369.1">
    <property type="nucleotide sequence ID" value="NC_002942.5"/>
</dbReference>
<dbReference type="SMR" id="Q5ZYP7"/>
<dbReference type="STRING" id="272624.lpg0325"/>
<dbReference type="PaxDb" id="272624-lpg0325"/>
<dbReference type="GeneID" id="57034328"/>
<dbReference type="KEGG" id="lpn:lpg0325"/>
<dbReference type="PATRIC" id="fig|272624.6.peg.332"/>
<dbReference type="eggNOG" id="COG0049">
    <property type="taxonomic scope" value="Bacteria"/>
</dbReference>
<dbReference type="HOGENOM" id="CLU_072226_1_1_6"/>
<dbReference type="OrthoDB" id="9807653at2"/>
<dbReference type="Proteomes" id="UP000000609">
    <property type="component" value="Chromosome"/>
</dbReference>
<dbReference type="GO" id="GO:0015935">
    <property type="term" value="C:small ribosomal subunit"/>
    <property type="evidence" value="ECO:0007669"/>
    <property type="project" value="InterPro"/>
</dbReference>
<dbReference type="GO" id="GO:0019843">
    <property type="term" value="F:rRNA binding"/>
    <property type="evidence" value="ECO:0007669"/>
    <property type="project" value="UniProtKB-UniRule"/>
</dbReference>
<dbReference type="GO" id="GO:0003735">
    <property type="term" value="F:structural constituent of ribosome"/>
    <property type="evidence" value="ECO:0007669"/>
    <property type="project" value="InterPro"/>
</dbReference>
<dbReference type="GO" id="GO:0000049">
    <property type="term" value="F:tRNA binding"/>
    <property type="evidence" value="ECO:0007669"/>
    <property type="project" value="UniProtKB-UniRule"/>
</dbReference>
<dbReference type="GO" id="GO:0006412">
    <property type="term" value="P:translation"/>
    <property type="evidence" value="ECO:0007669"/>
    <property type="project" value="UniProtKB-UniRule"/>
</dbReference>
<dbReference type="CDD" id="cd14869">
    <property type="entry name" value="uS7_Bacteria"/>
    <property type="match status" value="1"/>
</dbReference>
<dbReference type="FunFam" id="1.10.455.10:FF:000001">
    <property type="entry name" value="30S ribosomal protein S7"/>
    <property type="match status" value="1"/>
</dbReference>
<dbReference type="Gene3D" id="1.10.455.10">
    <property type="entry name" value="Ribosomal protein S7 domain"/>
    <property type="match status" value="1"/>
</dbReference>
<dbReference type="HAMAP" id="MF_00480_B">
    <property type="entry name" value="Ribosomal_uS7_B"/>
    <property type="match status" value="1"/>
</dbReference>
<dbReference type="InterPro" id="IPR000235">
    <property type="entry name" value="Ribosomal_uS7"/>
</dbReference>
<dbReference type="InterPro" id="IPR005717">
    <property type="entry name" value="Ribosomal_uS7_bac/org-type"/>
</dbReference>
<dbReference type="InterPro" id="IPR023798">
    <property type="entry name" value="Ribosomal_uS7_dom"/>
</dbReference>
<dbReference type="InterPro" id="IPR036823">
    <property type="entry name" value="Ribosomal_uS7_dom_sf"/>
</dbReference>
<dbReference type="NCBIfam" id="TIGR01029">
    <property type="entry name" value="rpsG_bact"/>
    <property type="match status" value="1"/>
</dbReference>
<dbReference type="PANTHER" id="PTHR11205">
    <property type="entry name" value="RIBOSOMAL PROTEIN S7"/>
    <property type="match status" value="1"/>
</dbReference>
<dbReference type="Pfam" id="PF00177">
    <property type="entry name" value="Ribosomal_S7"/>
    <property type="match status" value="1"/>
</dbReference>
<dbReference type="PIRSF" id="PIRSF002122">
    <property type="entry name" value="RPS7p_RPS7a_RPS5e_RPS7o"/>
    <property type="match status" value="1"/>
</dbReference>
<dbReference type="SUPFAM" id="SSF47973">
    <property type="entry name" value="Ribosomal protein S7"/>
    <property type="match status" value="1"/>
</dbReference>
<name>RS7_LEGPH</name>
<comment type="function">
    <text evidence="1">One of the primary rRNA binding proteins, it binds directly to 16S rRNA where it nucleates assembly of the head domain of the 30S subunit. Is located at the subunit interface close to the decoding center, probably blocks exit of the E-site tRNA.</text>
</comment>
<comment type="subunit">
    <text evidence="1">Part of the 30S ribosomal subunit. Contacts proteins S9 and S11.</text>
</comment>
<comment type="similarity">
    <text evidence="1">Belongs to the universal ribosomal protein uS7 family.</text>
</comment>
<sequence>MPRRREVPKREILPDPKHHSELLAKFINVLMVSGKKSIAEKITYGALSVMEERVKKIKKNEEDGSETGSSGSAGAVLRYFEEALDNVRPSVEVRSRRVGGATYQVPVEVRHDRSIALGMRWIVQAARTRGEKGMMLRLAGELMDAYENKGSAVKKREDTHKMAKANQAFAHFRWN</sequence>
<reference key="1">
    <citation type="journal article" date="2004" name="Science">
        <title>The genomic sequence of the accidental pathogen Legionella pneumophila.</title>
        <authorList>
            <person name="Chien M."/>
            <person name="Morozova I."/>
            <person name="Shi S."/>
            <person name="Sheng H."/>
            <person name="Chen J."/>
            <person name="Gomez S.M."/>
            <person name="Asamani G."/>
            <person name="Hill K."/>
            <person name="Nuara J."/>
            <person name="Feder M."/>
            <person name="Rineer J."/>
            <person name="Greenberg J.J."/>
            <person name="Steshenko V."/>
            <person name="Park S.H."/>
            <person name="Zhao B."/>
            <person name="Teplitskaya E."/>
            <person name="Edwards J.R."/>
            <person name="Pampou S."/>
            <person name="Georghiou A."/>
            <person name="Chou I.-C."/>
            <person name="Iannuccilli W."/>
            <person name="Ulz M.E."/>
            <person name="Kim D.H."/>
            <person name="Geringer-Sameth A."/>
            <person name="Goldsberry C."/>
            <person name="Morozov P."/>
            <person name="Fischer S.G."/>
            <person name="Segal G."/>
            <person name="Qu X."/>
            <person name="Rzhetsky A."/>
            <person name="Zhang P."/>
            <person name="Cayanis E."/>
            <person name="De Jong P.J."/>
            <person name="Ju J."/>
            <person name="Kalachikov S."/>
            <person name="Shuman H.A."/>
            <person name="Russo J.J."/>
        </authorList>
    </citation>
    <scope>NUCLEOTIDE SEQUENCE [LARGE SCALE GENOMIC DNA]</scope>
    <source>
        <strain>Philadelphia 1 / ATCC 33152 / DSM 7513</strain>
    </source>
</reference>
<keyword id="KW-1185">Reference proteome</keyword>
<keyword id="KW-0687">Ribonucleoprotein</keyword>
<keyword id="KW-0689">Ribosomal protein</keyword>
<keyword id="KW-0694">RNA-binding</keyword>
<keyword id="KW-0699">rRNA-binding</keyword>
<keyword id="KW-0820">tRNA-binding</keyword>